<organism>
    <name type="scientific">Vibrio campbellii (strain ATCC BAA-1116)</name>
    <dbReference type="NCBI Taxonomy" id="2902295"/>
    <lineage>
        <taxon>Bacteria</taxon>
        <taxon>Pseudomonadati</taxon>
        <taxon>Pseudomonadota</taxon>
        <taxon>Gammaproteobacteria</taxon>
        <taxon>Vibrionales</taxon>
        <taxon>Vibrionaceae</taxon>
        <taxon>Vibrio</taxon>
    </lineage>
</organism>
<name>RLMI_VIBC1</name>
<accession>A7MZM6</accession>
<sequence length="397" mass="44430">MTAAIYLVKGREKSVKRKHPWIFSRGISKVEGEPALGETVDVFTHDGKWLAKAAYSPASQIRARIWSFEKEEINKAFFVKRFNNAQLLREDIIERDGLTGYRLIAAESDGMPGVTIDRYQNFFVCQLLSAGAEYNKQAIVDALVECFPDCNVYERSDVAVRKKEGLKETTGVLHGEEPPKSVVIEENGVKISVDIVGGHKTGFYLDQRDSRQQAMKYVKDKEVLNCFSYTGGFGLYALKGGAKRVINADVSQPALDTAKFNAELNEFDISKKRAVFLNADVFKLLREYRDQGTKFDVVIMDPPKFAESKAQLNGACRGYKDINMLAMQILNPGGTLLTYSCSGLMDQVLFQKIIADAAVDANRQVKFVERFEQAADHPTDTAYPEGFYLKGFACKVL</sequence>
<dbReference type="EC" id="2.1.1.191" evidence="1"/>
<dbReference type="EMBL" id="CP000789">
    <property type="protein sequence ID" value="ABU71332.1"/>
    <property type="molecule type" value="Genomic_DNA"/>
</dbReference>
<dbReference type="RefSeq" id="WP_010647923.1">
    <property type="nucleotide sequence ID" value="NC_022269.1"/>
</dbReference>
<dbReference type="SMR" id="A7MZM6"/>
<dbReference type="KEGG" id="vha:VIBHAR_02370"/>
<dbReference type="PATRIC" id="fig|338187.25.peg.331"/>
<dbReference type="Proteomes" id="UP000008152">
    <property type="component" value="Chromosome I"/>
</dbReference>
<dbReference type="GO" id="GO:0005737">
    <property type="term" value="C:cytoplasm"/>
    <property type="evidence" value="ECO:0007669"/>
    <property type="project" value="UniProtKB-SubCell"/>
</dbReference>
<dbReference type="GO" id="GO:0003723">
    <property type="term" value="F:RNA binding"/>
    <property type="evidence" value="ECO:0007669"/>
    <property type="project" value="UniProtKB-KW"/>
</dbReference>
<dbReference type="GO" id="GO:0016434">
    <property type="term" value="F:rRNA (cytosine) methyltransferase activity"/>
    <property type="evidence" value="ECO:0007669"/>
    <property type="project" value="UniProtKB-UniRule"/>
</dbReference>
<dbReference type="CDD" id="cd02440">
    <property type="entry name" value="AdoMet_MTases"/>
    <property type="match status" value="1"/>
</dbReference>
<dbReference type="CDD" id="cd21153">
    <property type="entry name" value="PUA_RlmI"/>
    <property type="match status" value="1"/>
</dbReference>
<dbReference type="CDD" id="cd11572">
    <property type="entry name" value="RlmI_M_like"/>
    <property type="match status" value="1"/>
</dbReference>
<dbReference type="Gene3D" id="2.30.130.10">
    <property type="entry name" value="PUA domain"/>
    <property type="match status" value="1"/>
</dbReference>
<dbReference type="Gene3D" id="3.30.750.80">
    <property type="entry name" value="RNA methyltransferase domain (HRMD) like"/>
    <property type="match status" value="1"/>
</dbReference>
<dbReference type="Gene3D" id="3.40.50.150">
    <property type="entry name" value="Vaccinia Virus protein VP39"/>
    <property type="match status" value="1"/>
</dbReference>
<dbReference type="HAMAP" id="MF_01857">
    <property type="entry name" value="23SrRNA_methyltr_I"/>
    <property type="match status" value="1"/>
</dbReference>
<dbReference type="InterPro" id="IPR002478">
    <property type="entry name" value="PUA"/>
</dbReference>
<dbReference type="InterPro" id="IPR015947">
    <property type="entry name" value="PUA-like_sf"/>
</dbReference>
<dbReference type="InterPro" id="IPR036974">
    <property type="entry name" value="PUA_sf"/>
</dbReference>
<dbReference type="InterPro" id="IPR023542">
    <property type="entry name" value="RLMI"/>
</dbReference>
<dbReference type="InterPro" id="IPR041532">
    <property type="entry name" value="RlmI-like_PUA"/>
</dbReference>
<dbReference type="InterPro" id="IPR019614">
    <property type="entry name" value="SAM-dep_methyl-trfase"/>
</dbReference>
<dbReference type="InterPro" id="IPR029063">
    <property type="entry name" value="SAM-dependent_MTases_sf"/>
</dbReference>
<dbReference type="PANTHER" id="PTHR42873">
    <property type="entry name" value="RIBOSOMAL RNA LARGE SUBUNIT METHYLTRANSFERASE"/>
    <property type="match status" value="1"/>
</dbReference>
<dbReference type="PANTHER" id="PTHR42873:SF1">
    <property type="entry name" value="S-ADENOSYLMETHIONINE-DEPENDENT METHYLTRANSFERASE DOMAIN-CONTAINING PROTEIN"/>
    <property type="match status" value="1"/>
</dbReference>
<dbReference type="Pfam" id="PF10672">
    <property type="entry name" value="Methyltrans_SAM"/>
    <property type="match status" value="1"/>
</dbReference>
<dbReference type="Pfam" id="PF17785">
    <property type="entry name" value="PUA_3"/>
    <property type="match status" value="1"/>
</dbReference>
<dbReference type="SMART" id="SM00359">
    <property type="entry name" value="PUA"/>
    <property type="match status" value="1"/>
</dbReference>
<dbReference type="SUPFAM" id="SSF88697">
    <property type="entry name" value="PUA domain-like"/>
    <property type="match status" value="1"/>
</dbReference>
<dbReference type="SUPFAM" id="SSF53335">
    <property type="entry name" value="S-adenosyl-L-methionine-dependent methyltransferases"/>
    <property type="match status" value="1"/>
</dbReference>
<dbReference type="PROSITE" id="PS50890">
    <property type="entry name" value="PUA"/>
    <property type="match status" value="1"/>
</dbReference>
<proteinExistence type="inferred from homology"/>
<comment type="function">
    <text evidence="1">Specifically methylates the cytosine at position 1962 (m5C1962) of 23S rRNA.</text>
</comment>
<comment type="catalytic activity">
    <reaction evidence="1">
        <text>cytidine(1962) in 23S rRNA + S-adenosyl-L-methionine = 5-methylcytidine(1962) in 23S rRNA + S-adenosyl-L-homocysteine + H(+)</text>
        <dbReference type="Rhea" id="RHEA:42912"/>
        <dbReference type="Rhea" id="RHEA-COMP:10382"/>
        <dbReference type="Rhea" id="RHEA-COMP:10386"/>
        <dbReference type="ChEBI" id="CHEBI:15378"/>
        <dbReference type="ChEBI" id="CHEBI:57856"/>
        <dbReference type="ChEBI" id="CHEBI:59789"/>
        <dbReference type="ChEBI" id="CHEBI:74483"/>
        <dbReference type="ChEBI" id="CHEBI:82748"/>
        <dbReference type="EC" id="2.1.1.191"/>
    </reaction>
</comment>
<comment type="subcellular location">
    <subcellularLocation>
        <location evidence="1">Cytoplasm</location>
    </subcellularLocation>
</comment>
<comment type="similarity">
    <text evidence="1">Belongs to the methyltransferase superfamily. RlmI family.</text>
</comment>
<keyword id="KW-0963">Cytoplasm</keyword>
<keyword id="KW-0489">Methyltransferase</keyword>
<keyword id="KW-0694">RNA-binding</keyword>
<keyword id="KW-0698">rRNA processing</keyword>
<keyword id="KW-0949">S-adenosyl-L-methionine</keyword>
<keyword id="KW-0808">Transferase</keyword>
<feature type="chain" id="PRO_0000366275" description="Ribosomal RNA large subunit methyltransferase I">
    <location>
        <begin position="1"/>
        <end position="397"/>
    </location>
</feature>
<feature type="domain" description="PUA" evidence="1">
    <location>
        <begin position="2"/>
        <end position="79"/>
    </location>
</feature>
<reference key="1">
    <citation type="submission" date="2007-08" db="EMBL/GenBank/DDBJ databases">
        <authorList>
            <consortium name="The Vibrio harveyi Genome Sequencing Project"/>
            <person name="Bassler B."/>
            <person name="Clifton S.W."/>
            <person name="Fulton L."/>
            <person name="Delehaunty K."/>
            <person name="Fronick C."/>
            <person name="Harrison M."/>
            <person name="Markivic C."/>
            <person name="Fulton R."/>
            <person name="Tin-Wollam A.-M."/>
            <person name="Shah N."/>
            <person name="Pepin K."/>
            <person name="Nash W."/>
            <person name="Thiruvilangam P."/>
            <person name="Bhonagiri V."/>
            <person name="Waters C."/>
            <person name="Tu K.C."/>
            <person name="Irgon J."/>
            <person name="Wilson R.K."/>
        </authorList>
    </citation>
    <scope>NUCLEOTIDE SEQUENCE [LARGE SCALE GENOMIC DNA]</scope>
    <source>
        <strain>ATCC BAA-1116 / BB120</strain>
    </source>
</reference>
<protein>
    <recommendedName>
        <fullName evidence="1">Ribosomal RNA large subunit methyltransferase I</fullName>
        <ecNumber evidence="1">2.1.1.191</ecNumber>
    </recommendedName>
    <alternativeName>
        <fullName evidence="1">23S rRNA m5C1962 methyltransferase</fullName>
    </alternativeName>
    <alternativeName>
        <fullName evidence="1">rRNA (cytosine-C(5)-)-methyltransferase RlmI</fullName>
    </alternativeName>
</protein>
<gene>
    <name evidence="1" type="primary">rlmI</name>
    <name type="ordered locus">VIBHAR_02370</name>
</gene>
<evidence type="ECO:0000255" key="1">
    <source>
        <dbReference type="HAMAP-Rule" id="MF_01857"/>
    </source>
</evidence>